<comment type="function">
    <text evidence="1 2 5 6">Trans-enoyl reductase; part of the tra gene cluster that produces terrestric acid (PubMed:30811183). The clavatol biosynthesis cluster cla and the terrestric acid cluster tra are both involved in the production of peniphenones and penilactones (PubMed:30811183). The non-reducing PKS claF is responsible for the formation of clavatol from successive condensations of 3 malonyl-CoA units, presumably with a simple acetyl-CoA starter unit, and 2 methylation steps (PubMed:30811183). The esterase claE probably collaborates with claF by catalyzing the hydrolysis of ACP-bound acyl intermediates to free the ACP from stalled intermediates (By similarity). The clavatol oxidase claD then converts clavatol to hydroxyclavatol (PubMed:30811183). Spontaneous dehydration of hydroxyclavatol leads to the accumulation of the highly active ortho-quinone methide (PubMed:30811183, PubMed:31860310). On the other hand, the PKS-NRPS hybrid traA is involved in the formation of crustosic acid, with the help of traB and traD (PubMed:30811183). The polyketide synthase module (PKS) of traA is responsible for the synthesis of the polyketide backbone via the condensation of an acetyl-CoA starter unit with 3 malonyl-CoA units (PubMed:30811183). The downstream nonribosomal peptide synthetase (NRPS) module then amidates the carboxyl end of the polyketide with L-malic acid (PubMed:30811183). Because traA lacks a designated enoylreductase (ER) domain, the required activity is provided the enoyl reductase traG (By similarity). Crustosic acid undergoes decarboxylation and isomerization to the terrestric acid, catalyzed by the 2-oxoglutarate-dependent dioxygenase traH (PubMed:30811183). Both acids are further converted to the 2 gamma-butyrolactones (R)-5-methyltetronic acid and (S)-5-carboxylmethyltetronic acid, with involvement of the cytochrome P450 monooxygenase claJ (PubMed:30811183). Spontaneous addition of the methide to these gamma-butyrolactones leads to peniphenone D and penilactone D, which undergo again stereospecific attacking by methide to give penilactones A and B (PubMed:30811183, PubMed:31860310).</text>
</comment>
<comment type="pathway">
    <text evidence="1">Secondary metabolite biosynthesis.</text>
</comment>
<comment type="subunit">
    <text evidence="3">Monomer.</text>
</comment>
<comment type="similarity">
    <text evidence="8">Belongs to the zinc-containing alcohol dehydrogenase family.</text>
</comment>
<protein>
    <recommendedName>
        <fullName evidence="7">Trans-enoyl reductase traG</fullName>
        <ecNumber evidence="9">1.-.-.-</ecNumber>
    </recommendedName>
    <alternativeName>
        <fullName evidence="7">Terrestric acid biosynthesis cluster protein G</fullName>
    </alternativeName>
</protein>
<proteinExistence type="inferred from homology"/>
<gene>
    <name evidence="7" type="primary">traG</name>
</gene>
<dbReference type="EC" id="1.-.-.-" evidence="9"/>
<dbReference type="EMBL" id="MK360919">
    <property type="protein sequence ID" value="QBK15055.1"/>
    <property type="molecule type" value="Genomic_DNA"/>
</dbReference>
<dbReference type="SMR" id="A0A481WQL4"/>
<dbReference type="GO" id="GO:0000166">
    <property type="term" value="F:nucleotide binding"/>
    <property type="evidence" value="ECO:0007669"/>
    <property type="project" value="UniProtKB-KW"/>
</dbReference>
<dbReference type="GO" id="GO:0016651">
    <property type="term" value="F:oxidoreductase activity, acting on NAD(P)H"/>
    <property type="evidence" value="ECO:0007669"/>
    <property type="project" value="InterPro"/>
</dbReference>
<dbReference type="CDD" id="cd08249">
    <property type="entry name" value="enoyl_reductase_like"/>
    <property type="match status" value="1"/>
</dbReference>
<dbReference type="Gene3D" id="3.90.180.10">
    <property type="entry name" value="Medium-chain alcohol dehydrogenases, catalytic domain"/>
    <property type="match status" value="1"/>
</dbReference>
<dbReference type="Gene3D" id="3.40.50.720">
    <property type="entry name" value="NAD(P)-binding Rossmann-like Domain"/>
    <property type="match status" value="1"/>
</dbReference>
<dbReference type="InterPro" id="IPR013149">
    <property type="entry name" value="ADH-like_C"/>
</dbReference>
<dbReference type="InterPro" id="IPR013154">
    <property type="entry name" value="ADH-like_N"/>
</dbReference>
<dbReference type="InterPro" id="IPR011032">
    <property type="entry name" value="GroES-like_sf"/>
</dbReference>
<dbReference type="InterPro" id="IPR036291">
    <property type="entry name" value="NAD(P)-bd_dom_sf"/>
</dbReference>
<dbReference type="InterPro" id="IPR020843">
    <property type="entry name" value="PKS_ER"/>
</dbReference>
<dbReference type="InterPro" id="IPR047122">
    <property type="entry name" value="Trans-enoyl_RdTase-like"/>
</dbReference>
<dbReference type="PANTHER" id="PTHR45348">
    <property type="entry name" value="HYPOTHETICAL OXIDOREDUCTASE (EUROFUNG)"/>
    <property type="match status" value="1"/>
</dbReference>
<dbReference type="PANTHER" id="PTHR45348:SF6">
    <property type="entry name" value="TRANS-ENOYL REDUCTASE APDC"/>
    <property type="match status" value="1"/>
</dbReference>
<dbReference type="Pfam" id="PF08240">
    <property type="entry name" value="ADH_N"/>
    <property type="match status" value="1"/>
</dbReference>
<dbReference type="Pfam" id="PF00107">
    <property type="entry name" value="ADH_zinc_N"/>
    <property type="match status" value="1"/>
</dbReference>
<dbReference type="SMART" id="SM00829">
    <property type="entry name" value="PKS_ER"/>
    <property type="match status" value="1"/>
</dbReference>
<dbReference type="SUPFAM" id="SSF50129">
    <property type="entry name" value="GroES-like"/>
    <property type="match status" value="1"/>
</dbReference>
<dbReference type="SUPFAM" id="SSF51735">
    <property type="entry name" value="NAD(P)-binding Rossmann-fold domains"/>
    <property type="match status" value="1"/>
</dbReference>
<evidence type="ECO:0000250" key="1">
    <source>
        <dbReference type="UniProtKB" id="A0A0E0RXA7"/>
    </source>
</evidence>
<evidence type="ECO:0000250" key="2">
    <source>
        <dbReference type="UniProtKB" id="A0A161CKG1"/>
    </source>
</evidence>
<evidence type="ECO:0000250" key="3">
    <source>
        <dbReference type="UniProtKB" id="Q9Y7D0"/>
    </source>
</evidence>
<evidence type="ECO:0000255" key="4"/>
<evidence type="ECO:0000269" key="5">
    <source>
    </source>
</evidence>
<evidence type="ECO:0000269" key="6">
    <source>
    </source>
</evidence>
<evidence type="ECO:0000303" key="7">
    <source>
    </source>
</evidence>
<evidence type="ECO:0000305" key="8"/>
<evidence type="ECO:0000305" key="9">
    <source>
    </source>
</evidence>
<accession>A0A481WQL4</accession>
<reference key="1">
    <citation type="journal article" date="2019" name="J. Am. Chem. Soc.">
        <title>Peniphenone and penilactone formation in Penicillium crustosum via 1,4-Michael additions of ortho-quinone methide from hydroxyclavatol to gamma-butyrolactones from Crustosic Acid.</title>
        <authorList>
            <person name="Fan J."/>
            <person name="Liao G."/>
            <person name="Kindinger F."/>
            <person name="Ludwig-Radtke L."/>
            <person name="Yin W.B."/>
            <person name="Li S.M."/>
        </authorList>
    </citation>
    <scope>NUCLEOTIDE SEQUENCE [GENOMIC DNA]</scope>
    <scope>FUNCTION</scope>
    <source>
        <strain>PRB-2</strain>
    </source>
</reference>
<reference key="2">
    <citation type="journal article" date="2020" name="J. Org. Chem.">
        <title>Increasing Structural Diversity of Natural Products by Michael Addition with ortho-Quinone Methide as the Acceptor.</title>
        <authorList>
            <person name="Liao G."/>
            <person name="Fan J."/>
            <person name="Ludwig-Radtke L."/>
            <person name="Backhaus K."/>
            <person name="Li S.M."/>
        </authorList>
    </citation>
    <scope>FUNCTION</scope>
</reference>
<feature type="chain" id="PRO_0000455062" description="Trans-enoyl reductase traG">
    <location>
        <begin position="1"/>
        <end position="364"/>
    </location>
</feature>
<feature type="binding site" evidence="3">
    <location>
        <begin position="51"/>
        <end position="54"/>
    </location>
    <ligand>
        <name>NADP(+)</name>
        <dbReference type="ChEBI" id="CHEBI:58349"/>
    </ligand>
</feature>
<feature type="binding site" evidence="4">
    <location>
        <begin position="136"/>
        <end position="143"/>
    </location>
    <ligand>
        <name>substrate</name>
    </ligand>
</feature>
<feature type="binding site" evidence="3">
    <location>
        <begin position="176"/>
        <end position="179"/>
    </location>
    <ligand>
        <name>NADP(+)</name>
        <dbReference type="ChEBI" id="CHEBI:58349"/>
    </ligand>
</feature>
<feature type="binding site" evidence="3">
    <location>
        <begin position="199"/>
        <end position="202"/>
    </location>
    <ligand>
        <name>NADP(+)</name>
        <dbReference type="ChEBI" id="CHEBI:58349"/>
    </ligand>
</feature>
<feature type="binding site" evidence="3">
    <location>
        <position position="217"/>
    </location>
    <ligand>
        <name>NADP(+)</name>
        <dbReference type="ChEBI" id="CHEBI:58349"/>
    </ligand>
</feature>
<feature type="binding site" evidence="3">
    <location>
        <begin position="264"/>
        <end position="265"/>
    </location>
    <ligand>
        <name>NADP(+)</name>
        <dbReference type="ChEBI" id="CHEBI:58349"/>
    </ligand>
</feature>
<feature type="binding site" evidence="4">
    <location>
        <begin position="286"/>
        <end position="290"/>
    </location>
    <ligand>
        <name>substrate</name>
    </ligand>
</feature>
<feature type="binding site" evidence="3">
    <location>
        <begin position="355"/>
        <end position="356"/>
    </location>
    <ligand>
        <name>NADP(+)</name>
        <dbReference type="ChEBI" id="CHEBI:58349"/>
    </ligand>
</feature>
<sequence length="364" mass="38812">MPSATPILPRQQTAIVAEAAGKLRIQHNVTVPSPGPMVAIVKTAAVAINPVDAKMLDYSPVPGAVHGYDFAGTIVSMGPNTPAHLRIGDRVAGWVHGMNAVEPNVGAFAEYVASPADLILRIPDEMSFNDAASIGLGLFTAGLGLFHELKVPGSLSDPDGLEIAEDERFVLVAGGSTATGTRAIQLLRLAGLRPIATCSKANMDLVHRFGAEHAFDYSDPECAAEIRRYTGGTLAYALDCVAMADTTQLCYNAMGRAGGRYVTLEPFRSAIAETRPLTIEPSWLLALTVFGRKVDIDGEYSRDARPDDHKFAVELTVSVQALLDQGKFDTHPIKVMNGGWDGVKEGVDTIRTQAMSGQKLVYPV</sequence>
<keyword id="KW-0521">NADP</keyword>
<keyword id="KW-0547">Nucleotide-binding</keyword>
<keyword id="KW-0560">Oxidoreductase</keyword>
<name>TRAG_PENCR</name>
<organism>
    <name type="scientific">Penicillium crustosum</name>
    <name type="common">Blue mold fungus</name>
    <dbReference type="NCBI Taxonomy" id="36656"/>
    <lineage>
        <taxon>Eukaryota</taxon>
        <taxon>Fungi</taxon>
        <taxon>Dikarya</taxon>
        <taxon>Ascomycota</taxon>
        <taxon>Pezizomycotina</taxon>
        <taxon>Eurotiomycetes</taxon>
        <taxon>Eurotiomycetidae</taxon>
        <taxon>Eurotiales</taxon>
        <taxon>Aspergillaceae</taxon>
        <taxon>Penicillium</taxon>
    </lineage>
</organism>